<keyword id="KW-0687">Ribonucleoprotein</keyword>
<keyword id="KW-0689">Ribosomal protein</keyword>
<comment type="similarity">
    <text evidence="1">Belongs to the bacterial ribosomal protein bL35 family.</text>
</comment>
<gene>
    <name evidence="1" type="primary">rpmI</name>
    <name type="ordered locus">VV1_2399</name>
</gene>
<dbReference type="EMBL" id="AE016795">
    <property type="protein sequence ID" value="AAO10773.1"/>
    <property type="molecule type" value="Genomic_DNA"/>
</dbReference>
<dbReference type="RefSeq" id="WP_011080265.1">
    <property type="nucleotide sequence ID" value="NC_004459.3"/>
</dbReference>
<dbReference type="SMR" id="Q8DA11"/>
<dbReference type="GeneID" id="93896587"/>
<dbReference type="KEGG" id="vvu:VV1_2399"/>
<dbReference type="HOGENOM" id="CLU_169643_4_3_6"/>
<dbReference type="Proteomes" id="UP000002275">
    <property type="component" value="Chromosome 1"/>
</dbReference>
<dbReference type="GO" id="GO:0022625">
    <property type="term" value="C:cytosolic large ribosomal subunit"/>
    <property type="evidence" value="ECO:0007669"/>
    <property type="project" value="TreeGrafter"/>
</dbReference>
<dbReference type="GO" id="GO:0003735">
    <property type="term" value="F:structural constituent of ribosome"/>
    <property type="evidence" value="ECO:0007669"/>
    <property type="project" value="InterPro"/>
</dbReference>
<dbReference type="GO" id="GO:0006412">
    <property type="term" value="P:translation"/>
    <property type="evidence" value="ECO:0007669"/>
    <property type="project" value="UniProtKB-UniRule"/>
</dbReference>
<dbReference type="FunFam" id="4.10.410.60:FF:000001">
    <property type="entry name" value="50S ribosomal protein L35"/>
    <property type="match status" value="1"/>
</dbReference>
<dbReference type="Gene3D" id="4.10.410.60">
    <property type="match status" value="1"/>
</dbReference>
<dbReference type="HAMAP" id="MF_00514">
    <property type="entry name" value="Ribosomal_bL35"/>
    <property type="match status" value="1"/>
</dbReference>
<dbReference type="InterPro" id="IPR001706">
    <property type="entry name" value="Ribosomal_bL35"/>
</dbReference>
<dbReference type="InterPro" id="IPR021137">
    <property type="entry name" value="Ribosomal_bL35-like"/>
</dbReference>
<dbReference type="InterPro" id="IPR018265">
    <property type="entry name" value="Ribosomal_bL35_CS"/>
</dbReference>
<dbReference type="InterPro" id="IPR037229">
    <property type="entry name" value="Ribosomal_bL35_sf"/>
</dbReference>
<dbReference type="NCBIfam" id="TIGR00001">
    <property type="entry name" value="rpmI_bact"/>
    <property type="match status" value="1"/>
</dbReference>
<dbReference type="PANTHER" id="PTHR33343">
    <property type="entry name" value="54S RIBOSOMAL PROTEIN BL35M"/>
    <property type="match status" value="1"/>
</dbReference>
<dbReference type="PANTHER" id="PTHR33343:SF1">
    <property type="entry name" value="LARGE RIBOSOMAL SUBUNIT PROTEIN BL35M"/>
    <property type="match status" value="1"/>
</dbReference>
<dbReference type="Pfam" id="PF01632">
    <property type="entry name" value="Ribosomal_L35p"/>
    <property type="match status" value="1"/>
</dbReference>
<dbReference type="PRINTS" id="PR00064">
    <property type="entry name" value="RIBOSOMALL35"/>
</dbReference>
<dbReference type="SUPFAM" id="SSF143034">
    <property type="entry name" value="L35p-like"/>
    <property type="match status" value="1"/>
</dbReference>
<dbReference type="PROSITE" id="PS00936">
    <property type="entry name" value="RIBOSOMAL_L35"/>
    <property type="match status" value="1"/>
</dbReference>
<sequence>MPKMKNNKGAAKRFKKTAGGIKYKHATKRHILTKRTTKNKRQLRPNSLLPRCEVAAVARMLPYA</sequence>
<organism>
    <name type="scientific">Vibrio vulnificus (strain CMCP6)</name>
    <dbReference type="NCBI Taxonomy" id="216895"/>
    <lineage>
        <taxon>Bacteria</taxon>
        <taxon>Pseudomonadati</taxon>
        <taxon>Pseudomonadota</taxon>
        <taxon>Gammaproteobacteria</taxon>
        <taxon>Vibrionales</taxon>
        <taxon>Vibrionaceae</taxon>
        <taxon>Vibrio</taxon>
    </lineage>
</organism>
<name>RL35_VIBVU</name>
<evidence type="ECO:0000255" key="1">
    <source>
        <dbReference type="HAMAP-Rule" id="MF_00514"/>
    </source>
</evidence>
<evidence type="ECO:0000305" key="2"/>
<accession>Q8DA11</accession>
<reference key="1">
    <citation type="submission" date="2002-12" db="EMBL/GenBank/DDBJ databases">
        <title>Complete genome sequence of Vibrio vulnificus CMCP6.</title>
        <authorList>
            <person name="Rhee J.H."/>
            <person name="Kim S.Y."/>
            <person name="Chung S.S."/>
            <person name="Kim J.J."/>
            <person name="Moon Y.H."/>
            <person name="Jeong H."/>
            <person name="Choy H.E."/>
        </authorList>
    </citation>
    <scope>NUCLEOTIDE SEQUENCE [LARGE SCALE GENOMIC DNA]</scope>
    <source>
        <strain>CMCP6</strain>
    </source>
</reference>
<proteinExistence type="inferred from homology"/>
<feature type="chain" id="PRO_0000177454" description="Large ribosomal subunit protein bL35">
    <location>
        <begin position="1"/>
        <end position="64"/>
    </location>
</feature>
<protein>
    <recommendedName>
        <fullName evidence="1">Large ribosomal subunit protein bL35</fullName>
    </recommendedName>
    <alternativeName>
        <fullName evidence="2">50S ribosomal protein L35</fullName>
    </alternativeName>
</protein>